<protein>
    <recommendedName>
        <fullName>Transmembrane protein 71</fullName>
    </recommendedName>
</protein>
<sequence length="295" mass="32983">MYRISQLMSTPVASSSRLEREYAGELSPTCIFPSFTCDSLDGYHSFECGSIDPLTGSHYTCRRSPRLLTNGYYIWTEDSFLCDKDGNITLNPSQTSVMYKENLVRIFRKKKRICHSFSSLFNLSTSKSWLHGSIFGDINSSPSEDNWLKGTRRLDTDHCNGNADDLDCSSLTDDWESGKMNAESVITSSSSHIISQPPGGNSHSLSLQSQLTASERFQENSSDHSETRLLQEVFFQAILLAVCLIISACARWFMGEILASVFTCSLMITVAYVKSLFLSLASYFKTTACARFVKI</sequence>
<accession>Q6P5X7</accession>
<accession>Q3KRC2</accession>
<accession>Q8WVZ4</accession>
<accession>Q96LX9</accession>
<evidence type="ECO:0000255" key="1"/>
<evidence type="ECO:0000303" key="2">
    <source>
    </source>
</evidence>
<evidence type="ECO:0000303" key="3">
    <source>
    </source>
</evidence>
<evidence type="ECO:0000305" key="4"/>
<feature type="chain" id="PRO_0000278283" description="Transmembrane protein 71">
    <location>
        <begin position="1"/>
        <end position="295"/>
    </location>
</feature>
<feature type="transmembrane region" description="Helical" evidence="1">
    <location>
        <begin position="229"/>
        <end position="249"/>
    </location>
</feature>
<feature type="transmembrane region" description="Helical" evidence="1">
    <location>
        <begin position="253"/>
        <end position="273"/>
    </location>
</feature>
<feature type="splice variant" id="VSP_023259" description="In isoform 2." evidence="2 3">
    <location>
        <begin position="105"/>
        <end position="123"/>
    </location>
</feature>
<feature type="splice variant" id="VSP_023260" description="In isoform 3." evidence="3">
    <location>
        <begin position="163"/>
        <end position="225"/>
    </location>
</feature>
<feature type="sequence conflict" description="In Ref. 3; AAH22053." evidence="4" ref="3">
    <original>T</original>
    <variation>A</variation>
    <location>
        <position position="156"/>
    </location>
</feature>
<feature type="sequence conflict" description="In Ref. 1; BAB71537." evidence="4" ref="1">
    <original>I</original>
    <variation>T</variation>
    <location>
        <position position="246"/>
    </location>
</feature>
<comment type="interaction">
    <interactant intactId="EBI-12886878">
        <id>Q6P5X7-2</id>
    </interactant>
    <interactant intactId="EBI-2876774">
        <id>Q92520</id>
        <label>FAM3C</label>
    </interactant>
    <organismsDiffer>false</organismsDiffer>
    <experiments>3</experiments>
</comment>
<comment type="interaction">
    <interactant intactId="EBI-12886878">
        <id>Q6P5X7-2</id>
    </interactant>
    <interactant intactId="EBI-8652744">
        <id>Q96IW7</id>
        <label>SEC22A</label>
    </interactant>
    <organismsDiffer>false</organismsDiffer>
    <experiments>3</experiments>
</comment>
<comment type="interaction">
    <interactant intactId="EBI-12886878">
        <id>Q6P5X7-2</id>
    </interactant>
    <interactant intactId="EBI-710310">
        <id>Q15560</id>
        <label>TCEA2</label>
    </interactant>
    <organismsDiffer>false</organismsDiffer>
    <experiments>3</experiments>
</comment>
<comment type="interaction">
    <interactant intactId="EBI-12886878">
        <id>Q6P5X7-2</id>
    </interactant>
    <interactant intactId="EBI-6447886">
        <id>Q9Y320</id>
        <label>TMX2</label>
    </interactant>
    <organismsDiffer>false</organismsDiffer>
    <experiments>5</experiments>
</comment>
<comment type="interaction">
    <interactant intactId="EBI-12886878">
        <id>Q6P5X7-2</id>
    </interactant>
    <interactant intactId="EBI-11988865">
        <id>A5PKU2</id>
        <label>TUSC5</label>
    </interactant>
    <organismsDiffer>false</organismsDiffer>
    <experiments>3</experiments>
</comment>
<comment type="interaction">
    <interactant intactId="EBI-12886878">
        <id>Q6P5X7-2</id>
    </interactant>
    <interactant intactId="EBI-751210">
        <id>Q96EC8</id>
        <label>YIPF6</label>
    </interactant>
    <organismsDiffer>false</organismsDiffer>
    <experiments>3</experiments>
</comment>
<comment type="subcellular location">
    <subcellularLocation>
        <location evidence="4">Membrane</location>
        <topology evidence="4">Multi-pass membrane protein</topology>
    </subcellularLocation>
</comment>
<comment type="alternative products">
    <event type="alternative splicing"/>
    <isoform>
        <id>Q6P5X7-1</id>
        <name>1</name>
        <sequence type="displayed"/>
    </isoform>
    <isoform>
        <id>Q6P5X7-2</id>
        <name>2</name>
        <sequence type="described" ref="VSP_023259"/>
    </isoform>
    <isoform>
        <id>Q6P5X7-3</id>
        <name>3</name>
        <sequence type="described" ref="VSP_023260"/>
    </isoform>
</comment>
<comment type="similarity">
    <text evidence="4">Belongs to the TMEM71 family.</text>
</comment>
<dbReference type="EMBL" id="AK057631">
    <property type="protein sequence ID" value="BAB71537.1"/>
    <property type="molecule type" value="mRNA"/>
</dbReference>
<dbReference type="EMBL" id="AF216667">
    <property type="status" value="NOT_ANNOTATED_CDS"/>
    <property type="molecule type" value="Genomic_DNA"/>
</dbReference>
<dbReference type="EMBL" id="AF228727">
    <property type="status" value="NOT_ANNOTATED_CDS"/>
    <property type="molecule type" value="Genomic_DNA"/>
</dbReference>
<dbReference type="EMBL" id="AF257497">
    <property type="status" value="NOT_ANNOTATED_CDS"/>
    <property type="molecule type" value="Genomic_DNA"/>
</dbReference>
<dbReference type="EMBL" id="KC877343">
    <property type="status" value="NOT_ANNOTATED_CDS"/>
    <property type="molecule type" value="Genomic_DNA"/>
</dbReference>
<dbReference type="EMBL" id="KC877351">
    <property type="status" value="NOT_ANNOTATED_CDS"/>
    <property type="molecule type" value="Genomic_DNA"/>
</dbReference>
<dbReference type="EMBL" id="KC877355">
    <property type="status" value="NOT_ANNOTATED_CDS"/>
    <property type="molecule type" value="Genomic_DNA"/>
</dbReference>
<dbReference type="EMBL" id="KF454949">
    <property type="status" value="NOT_ANNOTATED_CDS"/>
    <property type="molecule type" value="Genomic_DNA"/>
</dbReference>
<dbReference type="EMBL" id="BC022053">
    <property type="protein sequence ID" value="AAH22053.2"/>
    <property type="molecule type" value="mRNA"/>
</dbReference>
<dbReference type="EMBL" id="BC062592">
    <property type="protein sequence ID" value="AAH62592.1"/>
    <property type="molecule type" value="mRNA"/>
</dbReference>
<dbReference type="EMBL" id="BC105783">
    <property type="protein sequence ID" value="AAI05784.1"/>
    <property type="molecule type" value="mRNA"/>
</dbReference>
<dbReference type="CCDS" id="CCDS47921.1">
    <molecule id="Q6P5X7-3"/>
</dbReference>
<dbReference type="CCDS" id="CCDS6366.1">
    <molecule id="Q6P5X7-2"/>
</dbReference>
<dbReference type="CCDS" id="CCDS94343.1">
    <molecule id="Q6P5X7-1"/>
</dbReference>
<dbReference type="RefSeq" id="NP_001138625.1">
    <molecule id="Q6P5X7-3"/>
    <property type="nucleotide sequence ID" value="NM_001145153.2"/>
</dbReference>
<dbReference type="RefSeq" id="NP_001369332.1">
    <molecule id="Q6P5X7-1"/>
    <property type="nucleotide sequence ID" value="NM_001382403.1"/>
</dbReference>
<dbReference type="RefSeq" id="NP_001369333.1">
    <molecule id="Q6P5X7-1"/>
    <property type="nucleotide sequence ID" value="NM_001382404.1"/>
</dbReference>
<dbReference type="RefSeq" id="NP_653250.2">
    <molecule id="Q6P5X7-2"/>
    <property type="nucleotide sequence ID" value="NM_144649.3"/>
</dbReference>
<dbReference type="SMR" id="Q6P5X7"/>
<dbReference type="BioGRID" id="126487">
    <property type="interactions" value="19"/>
</dbReference>
<dbReference type="FunCoup" id="Q6P5X7">
    <property type="interactions" value="258"/>
</dbReference>
<dbReference type="IntAct" id="Q6P5X7">
    <property type="interactions" value="6"/>
</dbReference>
<dbReference type="STRING" id="9606.ENSP00000349296"/>
<dbReference type="iPTMnet" id="Q6P5X7"/>
<dbReference type="PhosphoSitePlus" id="Q6P5X7"/>
<dbReference type="BioMuta" id="TMEM71"/>
<dbReference type="DMDM" id="126253812"/>
<dbReference type="PaxDb" id="9606-ENSP00000349296"/>
<dbReference type="Antibodypedia" id="74152">
    <property type="antibodies" value="39 antibodies from 11 providers"/>
</dbReference>
<dbReference type="DNASU" id="137835"/>
<dbReference type="Ensembl" id="ENST00000356838.7">
    <molecule id="Q6P5X7-2"/>
    <property type="protein sequence ID" value="ENSP00000349296.3"/>
    <property type="gene ID" value="ENSG00000165071.15"/>
</dbReference>
<dbReference type="Ensembl" id="ENST00000377901.8">
    <molecule id="Q6P5X7-3"/>
    <property type="protein sequence ID" value="ENSP00000367133.4"/>
    <property type="gene ID" value="ENSG00000165071.15"/>
</dbReference>
<dbReference type="Ensembl" id="ENST00000677595.1">
    <molecule id="Q6P5X7-1"/>
    <property type="protein sequence ID" value="ENSP00000504388.1"/>
    <property type="gene ID" value="ENSG00000165071.15"/>
</dbReference>
<dbReference type="GeneID" id="137835"/>
<dbReference type="KEGG" id="hsa:137835"/>
<dbReference type="MANE-Select" id="ENST00000677595.1">
    <property type="protein sequence ID" value="ENSP00000504388.1"/>
    <property type="RefSeq nucleotide sequence ID" value="NM_001382403.1"/>
    <property type="RefSeq protein sequence ID" value="NP_001369332.1"/>
</dbReference>
<dbReference type="UCSC" id="uc003ytn.4">
    <molecule id="Q6P5X7-1"/>
    <property type="organism name" value="human"/>
</dbReference>
<dbReference type="AGR" id="HGNC:26572"/>
<dbReference type="CTD" id="137835"/>
<dbReference type="DisGeNET" id="137835"/>
<dbReference type="GeneCards" id="TMEM71"/>
<dbReference type="HGNC" id="HGNC:26572">
    <property type="gene designation" value="TMEM71"/>
</dbReference>
<dbReference type="HPA" id="ENSG00000165071">
    <property type="expression patterns" value="Tissue enhanced (bone marrow, heart muscle)"/>
</dbReference>
<dbReference type="MalaCards" id="TMEM71"/>
<dbReference type="MIM" id="620287">
    <property type="type" value="gene"/>
</dbReference>
<dbReference type="neXtProt" id="NX_Q6P5X7"/>
<dbReference type="OpenTargets" id="ENSG00000165071"/>
<dbReference type="PharmGKB" id="PA142670784"/>
<dbReference type="VEuPathDB" id="HostDB:ENSG00000165071"/>
<dbReference type="eggNOG" id="ENOG502RZWR">
    <property type="taxonomic scope" value="Eukaryota"/>
</dbReference>
<dbReference type="GeneTree" id="ENSGT00390000011144"/>
<dbReference type="HOGENOM" id="CLU_084224_0_0_1"/>
<dbReference type="InParanoid" id="Q6P5X7"/>
<dbReference type="OMA" id="FMINANE"/>
<dbReference type="OrthoDB" id="8961338at2759"/>
<dbReference type="PAN-GO" id="Q6P5X7">
    <property type="GO annotations" value="0 GO annotations based on evolutionary models"/>
</dbReference>
<dbReference type="PhylomeDB" id="Q6P5X7"/>
<dbReference type="TreeFam" id="TF337383"/>
<dbReference type="PathwayCommons" id="Q6P5X7"/>
<dbReference type="SignaLink" id="Q6P5X7"/>
<dbReference type="BioGRID-ORCS" id="137835">
    <property type="hits" value="10 hits in 1145 CRISPR screens"/>
</dbReference>
<dbReference type="ChiTaRS" id="TMEM71">
    <property type="organism name" value="human"/>
</dbReference>
<dbReference type="GenomeRNAi" id="137835"/>
<dbReference type="Pharos" id="Q6P5X7">
    <property type="development level" value="Tdark"/>
</dbReference>
<dbReference type="PRO" id="PR:Q6P5X7"/>
<dbReference type="Proteomes" id="UP000005640">
    <property type="component" value="Chromosome 8"/>
</dbReference>
<dbReference type="RNAct" id="Q6P5X7">
    <property type="molecule type" value="protein"/>
</dbReference>
<dbReference type="Bgee" id="ENSG00000165071">
    <property type="expression patterns" value="Expressed in blood and 129 other cell types or tissues"/>
</dbReference>
<dbReference type="ExpressionAtlas" id="Q6P5X7">
    <property type="expression patterns" value="baseline and differential"/>
</dbReference>
<dbReference type="GO" id="GO:0016020">
    <property type="term" value="C:membrane"/>
    <property type="evidence" value="ECO:0007669"/>
    <property type="project" value="UniProtKB-SubCell"/>
</dbReference>
<dbReference type="GO" id="GO:0005739">
    <property type="term" value="C:mitochondrion"/>
    <property type="evidence" value="ECO:0000314"/>
    <property type="project" value="HPA"/>
</dbReference>
<dbReference type="InterPro" id="IPR027975">
    <property type="entry name" value="TMEM71"/>
</dbReference>
<dbReference type="PANTHER" id="PTHR35255">
    <property type="entry name" value="TRANSMEMBRANE PROTEIN 71"/>
    <property type="match status" value="1"/>
</dbReference>
<dbReference type="PANTHER" id="PTHR35255:SF1">
    <property type="entry name" value="TRANSMEMBRANE PROTEIN 71"/>
    <property type="match status" value="1"/>
</dbReference>
<dbReference type="Pfam" id="PF15121">
    <property type="entry name" value="TMEM71"/>
    <property type="match status" value="1"/>
</dbReference>
<proteinExistence type="evidence at protein level"/>
<gene>
    <name type="primary">TMEM71</name>
</gene>
<reference key="1">
    <citation type="journal article" date="2004" name="Nat. Genet.">
        <title>Complete sequencing and characterization of 21,243 full-length human cDNAs.</title>
        <authorList>
            <person name="Ota T."/>
            <person name="Suzuki Y."/>
            <person name="Nishikawa T."/>
            <person name="Otsuki T."/>
            <person name="Sugiyama T."/>
            <person name="Irie R."/>
            <person name="Wakamatsu A."/>
            <person name="Hayashi K."/>
            <person name="Sato H."/>
            <person name="Nagai K."/>
            <person name="Kimura K."/>
            <person name="Makita H."/>
            <person name="Sekine M."/>
            <person name="Obayashi M."/>
            <person name="Nishi T."/>
            <person name="Shibahara T."/>
            <person name="Tanaka T."/>
            <person name="Ishii S."/>
            <person name="Yamamoto J."/>
            <person name="Saito K."/>
            <person name="Kawai Y."/>
            <person name="Isono Y."/>
            <person name="Nakamura Y."/>
            <person name="Nagahari K."/>
            <person name="Murakami K."/>
            <person name="Yasuda T."/>
            <person name="Iwayanagi T."/>
            <person name="Wagatsuma M."/>
            <person name="Shiratori A."/>
            <person name="Sudo H."/>
            <person name="Hosoiri T."/>
            <person name="Kaku Y."/>
            <person name="Kodaira H."/>
            <person name="Kondo H."/>
            <person name="Sugawara M."/>
            <person name="Takahashi M."/>
            <person name="Kanda K."/>
            <person name="Yokoi T."/>
            <person name="Furuya T."/>
            <person name="Kikkawa E."/>
            <person name="Omura Y."/>
            <person name="Abe K."/>
            <person name="Kamihara K."/>
            <person name="Katsuta N."/>
            <person name="Sato K."/>
            <person name="Tanikawa M."/>
            <person name="Yamazaki M."/>
            <person name="Ninomiya K."/>
            <person name="Ishibashi T."/>
            <person name="Yamashita H."/>
            <person name="Murakawa K."/>
            <person name="Fujimori K."/>
            <person name="Tanai H."/>
            <person name="Kimata M."/>
            <person name="Watanabe M."/>
            <person name="Hiraoka S."/>
            <person name="Chiba Y."/>
            <person name="Ishida S."/>
            <person name="Ono Y."/>
            <person name="Takiguchi S."/>
            <person name="Watanabe S."/>
            <person name="Yosida M."/>
            <person name="Hotuta T."/>
            <person name="Kusano J."/>
            <person name="Kanehori K."/>
            <person name="Takahashi-Fujii A."/>
            <person name="Hara H."/>
            <person name="Tanase T.-O."/>
            <person name="Nomura Y."/>
            <person name="Togiya S."/>
            <person name="Komai F."/>
            <person name="Hara R."/>
            <person name="Takeuchi K."/>
            <person name="Arita M."/>
            <person name="Imose N."/>
            <person name="Musashino K."/>
            <person name="Yuuki H."/>
            <person name="Oshima A."/>
            <person name="Sasaki N."/>
            <person name="Aotsuka S."/>
            <person name="Yoshikawa Y."/>
            <person name="Matsunawa H."/>
            <person name="Ichihara T."/>
            <person name="Shiohata N."/>
            <person name="Sano S."/>
            <person name="Moriya S."/>
            <person name="Momiyama H."/>
            <person name="Satoh N."/>
            <person name="Takami S."/>
            <person name="Terashima Y."/>
            <person name="Suzuki O."/>
            <person name="Nakagawa S."/>
            <person name="Senoh A."/>
            <person name="Mizoguchi H."/>
            <person name="Goto Y."/>
            <person name="Shimizu F."/>
            <person name="Wakebe H."/>
            <person name="Hishigaki H."/>
            <person name="Watanabe T."/>
            <person name="Sugiyama A."/>
            <person name="Takemoto M."/>
            <person name="Kawakami B."/>
            <person name="Yamazaki M."/>
            <person name="Watanabe K."/>
            <person name="Kumagai A."/>
            <person name="Itakura S."/>
            <person name="Fukuzumi Y."/>
            <person name="Fujimori Y."/>
            <person name="Komiyama M."/>
            <person name="Tashiro H."/>
            <person name="Tanigami A."/>
            <person name="Fujiwara T."/>
            <person name="Ono T."/>
            <person name="Yamada K."/>
            <person name="Fujii Y."/>
            <person name="Ozaki K."/>
            <person name="Hirao M."/>
            <person name="Ohmori Y."/>
            <person name="Kawabata A."/>
            <person name="Hikiji T."/>
            <person name="Kobatake N."/>
            <person name="Inagaki H."/>
            <person name="Ikema Y."/>
            <person name="Okamoto S."/>
            <person name="Okitani R."/>
            <person name="Kawakami T."/>
            <person name="Noguchi S."/>
            <person name="Itoh T."/>
            <person name="Shigeta K."/>
            <person name="Senba T."/>
            <person name="Matsumura K."/>
            <person name="Nakajima Y."/>
            <person name="Mizuno T."/>
            <person name="Morinaga M."/>
            <person name="Sasaki M."/>
            <person name="Togashi T."/>
            <person name="Oyama M."/>
            <person name="Hata H."/>
            <person name="Watanabe M."/>
            <person name="Komatsu T."/>
            <person name="Mizushima-Sugano J."/>
            <person name="Satoh T."/>
            <person name="Shirai Y."/>
            <person name="Takahashi Y."/>
            <person name="Nakagawa K."/>
            <person name="Okumura K."/>
            <person name="Nagase T."/>
            <person name="Nomura N."/>
            <person name="Kikuchi H."/>
            <person name="Masuho Y."/>
            <person name="Yamashita R."/>
            <person name="Nakai K."/>
            <person name="Yada T."/>
            <person name="Nakamura Y."/>
            <person name="Ohara O."/>
            <person name="Isogai T."/>
            <person name="Sugano S."/>
        </authorList>
    </citation>
    <scope>NUCLEOTIDE SEQUENCE [LARGE SCALE MRNA] (ISOFORM 2)</scope>
    <source>
        <tissue>Trachea</tissue>
    </source>
</reference>
<reference key="2">
    <citation type="journal article" date="2006" name="Nature">
        <title>DNA sequence and analysis of human chromosome 8.</title>
        <authorList>
            <person name="Nusbaum C."/>
            <person name="Mikkelsen T.S."/>
            <person name="Zody M.C."/>
            <person name="Asakawa S."/>
            <person name="Taudien S."/>
            <person name="Garber M."/>
            <person name="Kodira C.D."/>
            <person name="Schueler M.G."/>
            <person name="Shimizu A."/>
            <person name="Whittaker C.A."/>
            <person name="Chang J.L."/>
            <person name="Cuomo C.A."/>
            <person name="Dewar K."/>
            <person name="FitzGerald M.G."/>
            <person name="Yang X."/>
            <person name="Allen N.R."/>
            <person name="Anderson S."/>
            <person name="Asakawa T."/>
            <person name="Blechschmidt K."/>
            <person name="Bloom T."/>
            <person name="Borowsky M.L."/>
            <person name="Butler J."/>
            <person name="Cook A."/>
            <person name="Corum B."/>
            <person name="DeArellano K."/>
            <person name="DeCaprio D."/>
            <person name="Dooley K.T."/>
            <person name="Dorris L. III"/>
            <person name="Engels R."/>
            <person name="Gloeckner G."/>
            <person name="Hafez N."/>
            <person name="Hagopian D.S."/>
            <person name="Hall J.L."/>
            <person name="Ishikawa S.K."/>
            <person name="Jaffe D.B."/>
            <person name="Kamat A."/>
            <person name="Kudoh J."/>
            <person name="Lehmann R."/>
            <person name="Lokitsang T."/>
            <person name="Macdonald P."/>
            <person name="Major J.E."/>
            <person name="Matthews C.D."/>
            <person name="Mauceli E."/>
            <person name="Menzel U."/>
            <person name="Mihalev A.H."/>
            <person name="Minoshima S."/>
            <person name="Murayama Y."/>
            <person name="Naylor J.W."/>
            <person name="Nicol R."/>
            <person name="Nguyen C."/>
            <person name="O'Leary S.B."/>
            <person name="O'Neill K."/>
            <person name="Parker S.C.J."/>
            <person name="Polley A."/>
            <person name="Raymond C.K."/>
            <person name="Reichwald K."/>
            <person name="Rodriguez J."/>
            <person name="Sasaki T."/>
            <person name="Schilhabel M."/>
            <person name="Siddiqui R."/>
            <person name="Smith C.L."/>
            <person name="Sneddon T.P."/>
            <person name="Talamas J.A."/>
            <person name="Tenzin P."/>
            <person name="Topham K."/>
            <person name="Venkataraman V."/>
            <person name="Wen G."/>
            <person name="Yamazaki S."/>
            <person name="Young S.K."/>
            <person name="Zeng Q."/>
            <person name="Zimmer A.R."/>
            <person name="Rosenthal A."/>
            <person name="Birren B.W."/>
            <person name="Platzer M."/>
            <person name="Shimizu N."/>
            <person name="Lander E.S."/>
        </authorList>
    </citation>
    <scope>NUCLEOTIDE SEQUENCE [LARGE SCALE GENOMIC DNA]</scope>
</reference>
<reference key="3">
    <citation type="journal article" date="2004" name="Genome Res.">
        <title>The status, quality, and expansion of the NIH full-length cDNA project: the Mammalian Gene Collection (MGC).</title>
        <authorList>
            <consortium name="The MGC Project Team"/>
        </authorList>
    </citation>
    <scope>NUCLEOTIDE SEQUENCE [LARGE SCALE MRNA] (ISOFORMS 2 AND 3)</scope>
    <scope>NUCLEOTIDE SEQUENCE [LARGE SCALE MRNA] OF 105-295 (ISOFORM 1)</scope>
    <source>
        <tissue>Lung</tissue>
        <tissue>Prostate</tissue>
    </source>
</reference>
<organism>
    <name type="scientific">Homo sapiens</name>
    <name type="common">Human</name>
    <dbReference type="NCBI Taxonomy" id="9606"/>
    <lineage>
        <taxon>Eukaryota</taxon>
        <taxon>Metazoa</taxon>
        <taxon>Chordata</taxon>
        <taxon>Craniata</taxon>
        <taxon>Vertebrata</taxon>
        <taxon>Euteleostomi</taxon>
        <taxon>Mammalia</taxon>
        <taxon>Eutheria</taxon>
        <taxon>Euarchontoglires</taxon>
        <taxon>Primates</taxon>
        <taxon>Haplorrhini</taxon>
        <taxon>Catarrhini</taxon>
        <taxon>Hominidae</taxon>
        <taxon>Homo</taxon>
    </lineage>
</organism>
<name>TMM71_HUMAN</name>
<keyword id="KW-0025">Alternative splicing</keyword>
<keyword id="KW-0472">Membrane</keyword>
<keyword id="KW-1185">Reference proteome</keyword>
<keyword id="KW-0812">Transmembrane</keyword>
<keyword id="KW-1133">Transmembrane helix</keyword>